<comment type="function">
    <text evidence="1">Acts as a Mg(2+) transporter. Can also transport other divalent cations such as Fe(2+), Sr(2+), Ba(2+), Mn(2+), Cu(2+) and Co(2+) but to a much less extent than Mg(2+) (By similarity).</text>
</comment>
<comment type="catalytic activity">
    <reaction evidence="1">
        <text>Mg(2+)(in) = Mg(2+)(out)</text>
        <dbReference type="Rhea" id="RHEA:29827"/>
        <dbReference type="ChEBI" id="CHEBI:18420"/>
    </reaction>
</comment>
<comment type="subcellular location">
    <subcellularLocation>
        <location evidence="1">Golgi apparatus membrane</location>
        <topology evidence="2">Multi-pass membrane protein</topology>
    </subcellularLocation>
</comment>
<comment type="similarity">
    <text evidence="3">Belongs to the NIPA family.</text>
</comment>
<accession>Q5RDB8</accession>
<organism>
    <name type="scientific">Pongo abelii</name>
    <name type="common">Sumatran orangutan</name>
    <name type="synonym">Pongo pygmaeus abelii</name>
    <dbReference type="NCBI Taxonomy" id="9601"/>
    <lineage>
        <taxon>Eukaryota</taxon>
        <taxon>Metazoa</taxon>
        <taxon>Chordata</taxon>
        <taxon>Craniata</taxon>
        <taxon>Vertebrata</taxon>
        <taxon>Euteleostomi</taxon>
        <taxon>Mammalia</taxon>
        <taxon>Eutheria</taxon>
        <taxon>Euarchontoglires</taxon>
        <taxon>Primates</taxon>
        <taxon>Haplorrhini</taxon>
        <taxon>Catarrhini</taxon>
        <taxon>Hominidae</taxon>
        <taxon>Pongo</taxon>
    </lineage>
</organism>
<sequence>MGAQVRLPPGEPCQEGYVLSLVCPNSSQAWCEITNVSQLLASPVLYTDLNSSINKLSISANVENKYSLYVGLVLAVSSSIFIGSSFILKKKGLLQLASKGITRAGQGGHSYLKEWLWWVGLLSMGVGEAANFAAYAFAPATLVTPLGALSVLISAILSSYFLNEHLNIHGKIGCILSILGSTVMVIHAPQEEEVTSLHEMEMKLRDPGFISFAVIVTVISLVLILIVAPKKGQTNILVYISICSLIGAFSVSSVKGLGIAIKELIEWKPVYKHPLVFVLLAVLVLSVTTQINYLNKALDTFNTSIVTPIYYVFFTSMVVTCSAILFQEWYGMTAGDIIGTLSGFFTIIIGIFLLHAFKNTDITWSELTSTAKKEAVSLNVSENNYVLLENLECSAPGYNDDVTLFSRTDD</sequence>
<dbReference type="EMBL" id="CR857996">
    <property type="protein sequence ID" value="CAH90239.1"/>
    <property type="molecule type" value="mRNA"/>
</dbReference>
<dbReference type="RefSeq" id="NP_001125102.1">
    <property type="nucleotide sequence ID" value="NM_001131630.1"/>
</dbReference>
<dbReference type="FunCoup" id="Q5RDB8">
    <property type="interactions" value="144"/>
</dbReference>
<dbReference type="STRING" id="9601.ENSPPYP00000016437"/>
<dbReference type="GlyCosmos" id="Q5RDB8">
    <property type="glycosylation" value="3 sites, No reported glycans"/>
</dbReference>
<dbReference type="GeneID" id="100171984"/>
<dbReference type="KEGG" id="pon:100171984"/>
<dbReference type="CTD" id="152519"/>
<dbReference type="eggNOG" id="KOG2922">
    <property type="taxonomic scope" value="Eukaryota"/>
</dbReference>
<dbReference type="InParanoid" id="Q5RDB8"/>
<dbReference type="OrthoDB" id="6428174at2759"/>
<dbReference type="Proteomes" id="UP000001595">
    <property type="component" value="Unplaced"/>
</dbReference>
<dbReference type="GO" id="GO:0005794">
    <property type="term" value="C:Golgi apparatus"/>
    <property type="evidence" value="ECO:0000250"/>
    <property type="project" value="UniProtKB"/>
</dbReference>
<dbReference type="GO" id="GO:0000139">
    <property type="term" value="C:Golgi membrane"/>
    <property type="evidence" value="ECO:0007669"/>
    <property type="project" value="UniProtKB-SubCell"/>
</dbReference>
<dbReference type="GO" id="GO:0015095">
    <property type="term" value="F:magnesium ion transmembrane transporter activity"/>
    <property type="evidence" value="ECO:0007669"/>
    <property type="project" value="InterPro"/>
</dbReference>
<dbReference type="InterPro" id="IPR008521">
    <property type="entry name" value="Mg_trans_NIPA"/>
</dbReference>
<dbReference type="PANTHER" id="PTHR12570">
    <property type="match status" value="1"/>
</dbReference>
<dbReference type="PANTHER" id="PTHR12570:SF13">
    <property type="entry name" value="MAGNESIUM TRANSPORTER NIPA3"/>
    <property type="match status" value="1"/>
</dbReference>
<dbReference type="Pfam" id="PF05653">
    <property type="entry name" value="Mg_trans_NIPA"/>
    <property type="match status" value="1"/>
</dbReference>
<dbReference type="SUPFAM" id="SSF103481">
    <property type="entry name" value="Multidrug resistance efflux transporter EmrE"/>
    <property type="match status" value="1"/>
</dbReference>
<keyword id="KW-0325">Glycoprotein</keyword>
<keyword id="KW-0333">Golgi apparatus</keyword>
<keyword id="KW-0406">Ion transport</keyword>
<keyword id="KW-0460">Magnesium</keyword>
<keyword id="KW-0472">Membrane</keyword>
<keyword id="KW-1185">Reference proteome</keyword>
<keyword id="KW-0812">Transmembrane</keyword>
<keyword id="KW-1133">Transmembrane helix</keyword>
<keyword id="KW-0813">Transport</keyword>
<protein>
    <recommendedName>
        <fullName>Magnesium transporter NIPA3</fullName>
    </recommendedName>
    <alternativeName>
        <fullName>NIPA-like protein 1</fullName>
    </alternativeName>
    <alternativeName>
        <fullName>Non-imprinted in Prader-Willi/Angelman syndrome region protein 3 homolog</fullName>
    </alternativeName>
</protein>
<feature type="chain" id="PRO_0000242147" description="Magnesium transporter NIPA3">
    <location>
        <begin position="1"/>
        <end position="410"/>
    </location>
</feature>
<feature type="topological domain" description="Extracellular" evidence="2">
    <location>
        <begin position="1"/>
        <end position="67"/>
    </location>
</feature>
<feature type="transmembrane region" description="Helical" evidence="2">
    <location>
        <begin position="68"/>
        <end position="88"/>
    </location>
</feature>
<feature type="topological domain" description="Cytoplasmic" evidence="2">
    <location>
        <begin position="89"/>
        <end position="114"/>
    </location>
</feature>
<feature type="transmembrane region" description="Helical" evidence="2">
    <location>
        <begin position="115"/>
        <end position="135"/>
    </location>
</feature>
<feature type="topological domain" description="Extracellular" evidence="2">
    <location>
        <position position="136"/>
    </location>
</feature>
<feature type="transmembrane region" description="Helical" evidence="2">
    <location>
        <begin position="137"/>
        <end position="157"/>
    </location>
</feature>
<feature type="topological domain" description="Cytoplasmic" evidence="2">
    <location>
        <begin position="158"/>
        <end position="165"/>
    </location>
</feature>
<feature type="transmembrane region" description="Helical" evidence="2">
    <location>
        <begin position="166"/>
        <end position="186"/>
    </location>
</feature>
<feature type="topological domain" description="Extracellular" evidence="2">
    <location>
        <begin position="187"/>
        <end position="207"/>
    </location>
</feature>
<feature type="transmembrane region" description="Helical" evidence="2">
    <location>
        <begin position="208"/>
        <end position="228"/>
    </location>
</feature>
<feature type="topological domain" description="Cytoplasmic" evidence="2">
    <location>
        <begin position="229"/>
        <end position="233"/>
    </location>
</feature>
<feature type="transmembrane region" description="Helical" evidence="2">
    <location>
        <begin position="234"/>
        <end position="254"/>
    </location>
</feature>
<feature type="topological domain" description="Extracellular" evidence="2">
    <location>
        <begin position="255"/>
        <end position="273"/>
    </location>
</feature>
<feature type="transmembrane region" description="Helical" evidence="2">
    <location>
        <begin position="274"/>
        <end position="294"/>
    </location>
</feature>
<feature type="topological domain" description="Cytoplasmic" evidence="2">
    <location>
        <begin position="295"/>
        <end position="304"/>
    </location>
</feature>
<feature type="transmembrane region" description="Helical" evidence="2">
    <location>
        <begin position="305"/>
        <end position="325"/>
    </location>
</feature>
<feature type="topological domain" description="Extracellular" evidence="2">
    <location>
        <begin position="326"/>
        <end position="336"/>
    </location>
</feature>
<feature type="transmembrane region" description="Helical" evidence="2">
    <location>
        <begin position="337"/>
        <end position="357"/>
    </location>
</feature>
<feature type="topological domain" description="Cytoplasmic" evidence="2">
    <location>
        <begin position="358"/>
        <end position="410"/>
    </location>
</feature>
<feature type="glycosylation site" description="N-linked (GlcNAc...) asparagine" evidence="2">
    <location>
        <position position="25"/>
    </location>
</feature>
<feature type="glycosylation site" description="N-linked (GlcNAc...) asparagine" evidence="2">
    <location>
        <position position="35"/>
    </location>
</feature>
<feature type="glycosylation site" description="N-linked (GlcNAc...) asparagine" evidence="2">
    <location>
        <position position="50"/>
    </location>
</feature>
<gene>
    <name type="primary">NIPAL1</name>
    <name type="synonym">NIPA3</name>
    <name type="synonym">NPAL1</name>
</gene>
<evidence type="ECO:0000250" key="1">
    <source>
        <dbReference type="UniProtKB" id="Q8BMW7"/>
    </source>
</evidence>
<evidence type="ECO:0000255" key="2"/>
<evidence type="ECO:0000305" key="3"/>
<proteinExistence type="evidence at transcript level"/>
<reference key="1">
    <citation type="submission" date="2004-11" db="EMBL/GenBank/DDBJ databases">
        <authorList>
            <consortium name="The German cDNA consortium"/>
        </authorList>
    </citation>
    <scope>NUCLEOTIDE SEQUENCE [LARGE SCALE MRNA]</scope>
    <source>
        <tissue>Kidney</tissue>
    </source>
</reference>
<name>NIPA3_PONAB</name>